<sequence>MEAPSENGFYFYVLWCADQTLYTGYTVNLKQRVARHNSGQGAKYTRVPKRRPVQLLYYESFENQHDAMSAEYFFKKQSRKEKLKYLKNNGVIVTTFSH</sequence>
<organism>
    <name type="scientific">Pediococcus acidilactici</name>
    <dbReference type="NCBI Taxonomy" id="1254"/>
    <lineage>
        <taxon>Bacteria</taxon>
        <taxon>Bacillati</taxon>
        <taxon>Bacillota</taxon>
        <taxon>Bacilli</taxon>
        <taxon>Lactobacillales</taxon>
        <taxon>Lactobacillaceae</taxon>
        <taxon>Pediococcus</taxon>
        <taxon>Pediococcus acidilactici group</taxon>
    </lineage>
</organism>
<name>Y98_PEDAC</name>
<reference key="1">
    <citation type="journal article" date="1995" name="J. Bacteriol.">
        <title>Pediococcus acidilactici ldhD gene: cloning, nucleotide sequence, and transcriptional analysis.</title>
        <authorList>
            <person name="Garmyn D."/>
            <person name="Ferain T."/>
            <person name="Bernard N."/>
            <person name="Hols P."/>
            <person name="Delplace B."/>
            <person name="Delcour J."/>
        </authorList>
    </citation>
    <scope>NUCLEOTIDE SEQUENCE [GENOMIC DNA]</scope>
    <source>
        <strain>DG302</strain>
    </source>
</reference>
<dbReference type="EMBL" id="X70925">
    <property type="protein sequence ID" value="CAA50274.1"/>
    <property type="molecule type" value="Genomic_DNA"/>
</dbReference>
<dbReference type="RefSeq" id="WP_002831531.1">
    <property type="nucleotide sequence ID" value="NZ_WHSF01000003.1"/>
</dbReference>
<dbReference type="SMR" id="Q51440"/>
<dbReference type="STRING" id="1254.A4V11_01315"/>
<dbReference type="GeneID" id="57365807"/>
<dbReference type="OrthoDB" id="9807770at2"/>
<dbReference type="CDD" id="cd10456">
    <property type="entry name" value="GIY-YIG_UPF0213"/>
    <property type="match status" value="1"/>
</dbReference>
<dbReference type="Gene3D" id="3.40.1440.10">
    <property type="entry name" value="GIY-YIG endonuclease"/>
    <property type="match status" value="1"/>
</dbReference>
<dbReference type="InterPro" id="IPR000305">
    <property type="entry name" value="GIY-YIG_endonuc"/>
</dbReference>
<dbReference type="InterPro" id="IPR035901">
    <property type="entry name" value="GIY-YIG_endonuc_sf"/>
</dbReference>
<dbReference type="InterPro" id="IPR050190">
    <property type="entry name" value="UPF0213_domain"/>
</dbReference>
<dbReference type="PANTHER" id="PTHR34477">
    <property type="entry name" value="UPF0213 PROTEIN YHBQ"/>
    <property type="match status" value="1"/>
</dbReference>
<dbReference type="PANTHER" id="PTHR34477:SF1">
    <property type="entry name" value="UPF0213 PROTEIN YHBQ"/>
    <property type="match status" value="1"/>
</dbReference>
<dbReference type="Pfam" id="PF01541">
    <property type="entry name" value="GIY-YIG"/>
    <property type="match status" value="1"/>
</dbReference>
<dbReference type="SMART" id="SM00465">
    <property type="entry name" value="GIYc"/>
    <property type="match status" value="1"/>
</dbReference>
<dbReference type="SUPFAM" id="SSF82771">
    <property type="entry name" value="GIY-YIG endonuclease"/>
    <property type="match status" value="1"/>
</dbReference>
<dbReference type="PROSITE" id="PS50164">
    <property type="entry name" value="GIY_YIG"/>
    <property type="match status" value="1"/>
</dbReference>
<comment type="similarity">
    <text evidence="2">Belongs to the UPF0213 family.</text>
</comment>
<evidence type="ECO:0000255" key="1">
    <source>
        <dbReference type="PROSITE-ProRule" id="PRU00977"/>
    </source>
</evidence>
<evidence type="ECO:0000305" key="2"/>
<protein>
    <recommendedName>
        <fullName>UPF0213 protein in ldhD 5'region</fullName>
    </recommendedName>
    <alternativeName>
        <fullName>Y98</fullName>
    </alternativeName>
</protein>
<accession>Q51440</accession>
<proteinExistence type="inferred from homology"/>
<feature type="chain" id="PRO_0000161373" description="UPF0213 protein in ldhD 5'region">
    <location>
        <begin position="1"/>
        <end position="98"/>
    </location>
</feature>
<feature type="domain" description="GIY-YIG" evidence="1">
    <location>
        <begin position="7"/>
        <end position="84"/>
    </location>
</feature>